<organism>
    <name type="scientific">Schizosaccharomyces pombe (strain 972 / ATCC 24843)</name>
    <name type="common">Fission yeast</name>
    <dbReference type="NCBI Taxonomy" id="284812"/>
    <lineage>
        <taxon>Eukaryota</taxon>
        <taxon>Fungi</taxon>
        <taxon>Dikarya</taxon>
        <taxon>Ascomycota</taxon>
        <taxon>Taphrinomycotina</taxon>
        <taxon>Schizosaccharomycetes</taxon>
        <taxon>Schizosaccharomycetales</taxon>
        <taxon>Schizosaccharomycetaceae</taxon>
        <taxon>Schizosaccharomyces</taxon>
    </lineage>
</organism>
<accession>O94301</accession>
<feature type="chain" id="PRO_0000372427" description="SAGA complex subunit Hfi1">
    <location>
        <begin position="1"/>
        <end position="339"/>
    </location>
</feature>
<gene>
    <name type="primary">hfi1</name>
    <name type="synonym">ada1</name>
    <name type="ORF">SPBC887.18c</name>
</gene>
<name>HFI1_SCHPO</name>
<reference key="1">
    <citation type="journal article" date="2002" name="Nature">
        <title>The genome sequence of Schizosaccharomyces pombe.</title>
        <authorList>
            <person name="Wood V."/>
            <person name="Gwilliam R."/>
            <person name="Rajandream M.A."/>
            <person name="Lyne M.H."/>
            <person name="Lyne R."/>
            <person name="Stewart A."/>
            <person name="Sgouros J.G."/>
            <person name="Peat N."/>
            <person name="Hayles J."/>
            <person name="Baker S.G."/>
            <person name="Basham D."/>
            <person name="Bowman S."/>
            <person name="Brooks K."/>
            <person name="Brown D."/>
            <person name="Brown S."/>
            <person name="Chillingworth T."/>
            <person name="Churcher C.M."/>
            <person name="Collins M."/>
            <person name="Connor R."/>
            <person name="Cronin A."/>
            <person name="Davis P."/>
            <person name="Feltwell T."/>
            <person name="Fraser A."/>
            <person name="Gentles S."/>
            <person name="Goble A."/>
            <person name="Hamlin N."/>
            <person name="Harris D.E."/>
            <person name="Hidalgo J."/>
            <person name="Hodgson G."/>
            <person name="Holroyd S."/>
            <person name="Hornsby T."/>
            <person name="Howarth S."/>
            <person name="Huckle E.J."/>
            <person name="Hunt S."/>
            <person name="Jagels K."/>
            <person name="James K.D."/>
            <person name="Jones L."/>
            <person name="Jones M."/>
            <person name="Leather S."/>
            <person name="McDonald S."/>
            <person name="McLean J."/>
            <person name="Mooney P."/>
            <person name="Moule S."/>
            <person name="Mungall K.L."/>
            <person name="Murphy L.D."/>
            <person name="Niblett D."/>
            <person name="Odell C."/>
            <person name="Oliver K."/>
            <person name="O'Neil S."/>
            <person name="Pearson D."/>
            <person name="Quail M.A."/>
            <person name="Rabbinowitsch E."/>
            <person name="Rutherford K.M."/>
            <person name="Rutter S."/>
            <person name="Saunders D."/>
            <person name="Seeger K."/>
            <person name="Sharp S."/>
            <person name="Skelton J."/>
            <person name="Simmonds M.N."/>
            <person name="Squares R."/>
            <person name="Squares S."/>
            <person name="Stevens K."/>
            <person name="Taylor K."/>
            <person name="Taylor R.G."/>
            <person name="Tivey A."/>
            <person name="Walsh S.V."/>
            <person name="Warren T."/>
            <person name="Whitehead S."/>
            <person name="Woodward J.R."/>
            <person name="Volckaert G."/>
            <person name="Aert R."/>
            <person name="Robben J."/>
            <person name="Grymonprez B."/>
            <person name="Weltjens I."/>
            <person name="Vanstreels E."/>
            <person name="Rieger M."/>
            <person name="Schaefer M."/>
            <person name="Mueller-Auer S."/>
            <person name="Gabel C."/>
            <person name="Fuchs M."/>
            <person name="Duesterhoeft A."/>
            <person name="Fritzc C."/>
            <person name="Holzer E."/>
            <person name="Moestl D."/>
            <person name="Hilbert H."/>
            <person name="Borzym K."/>
            <person name="Langer I."/>
            <person name="Beck A."/>
            <person name="Lehrach H."/>
            <person name="Reinhardt R."/>
            <person name="Pohl T.M."/>
            <person name="Eger P."/>
            <person name="Zimmermann W."/>
            <person name="Wedler H."/>
            <person name="Wambutt R."/>
            <person name="Purnelle B."/>
            <person name="Goffeau A."/>
            <person name="Cadieu E."/>
            <person name="Dreano S."/>
            <person name="Gloux S."/>
            <person name="Lelaure V."/>
            <person name="Mottier S."/>
            <person name="Galibert F."/>
            <person name="Aves S.J."/>
            <person name="Xiang Z."/>
            <person name="Hunt C."/>
            <person name="Moore K."/>
            <person name="Hurst S.M."/>
            <person name="Lucas M."/>
            <person name="Rochet M."/>
            <person name="Gaillardin C."/>
            <person name="Tallada V.A."/>
            <person name="Garzon A."/>
            <person name="Thode G."/>
            <person name="Daga R.R."/>
            <person name="Cruzado L."/>
            <person name="Jimenez J."/>
            <person name="Sanchez M."/>
            <person name="del Rey F."/>
            <person name="Benito J."/>
            <person name="Dominguez A."/>
            <person name="Revuelta J.L."/>
            <person name="Moreno S."/>
            <person name="Armstrong J."/>
            <person name="Forsburg S.L."/>
            <person name="Cerutti L."/>
            <person name="Lowe T."/>
            <person name="McCombie W.R."/>
            <person name="Paulsen I."/>
            <person name="Potashkin J."/>
            <person name="Shpakovski G.V."/>
            <person name="Ussery D."/>
            <person name="Barrell B.G."/>
            <person name="Nurse P."/>
        </authorList>
    </citation>
    <scope>NUCLEOTIDE SEQUENCE [LARGE SCALE GENOMIC DNA]</scope>
    <source>
        <strain>972 / ATCC 24843</strain>
    </source>
</reference>
<reference key="2">
    <citation type="journal article" date="2006" name="Nat. Biotechnol.">
        <title>ORFeome cloning and global analysis of protein localization in the fission yeast Schizosaccharomyces pombe.</title>
        <authorList>
            <person name="Matsuyama A."/>
            <person name="Arai R."/>
            <person name="Yashiroda Y."/>
            <person name="Shirai A."/>
            <person name="Kamata A."/>
            <person name="Sekido S."/>
            <person name="Kobayashi Y."/>
            <person name="Hashimoto A."/>
            <person name="Hamamoto M."/>
            <person name="Hiraoka Y."/>
            <person name="Horinouchi S."/>
            <person name="Yoshida M."/>
        </authorList>
    </citation>
    <scope>SUBCELLULAR LOCATION [LARGE SCALE ANALYSIS]</scope>
</reference>
<reference key="3">
    <citation type="journal article" date="2008" name="Genes Dev.">
        <title>The S. pombe SAGA complex controls the switch from proliferation to sexual differentiation through the opposing roles of its subunits Gcn5 and Spt8.</title>
        <authorList>
            <person name="Helmlinger D."/>
            <person name="Marguerat S."/>
            <person name="Villen J."/>
            <person name="Gygi S.P."/>
            <person name="Bahler J."/>
            <person name="Winston F."/>
        </authorList>
    </citation>
    <scope>IDENTIFICATION IN THE SAGA COMPLEX</scope>
    <scope>IDENTIFICATION BY MASS SPECTROMETRY</scope>
</reference>
<evidence type="ECO:0000250" key="1">
    <source>
        <dbReference type="UniProtKB" id="Q12060"/>
    </source>
</evidence>
<evidence type="ECO:0000269" key="2">
    <source>
    </source>
</evidence>
<evidence type="ECO:0000269" key="3">
    <source>
    </source>
</evidence>
<evidence type="ECO:0000305" key="4"/>
<dbReference type="EMBL" id="CU329671">
    <property type="protein sequence ID" value="CAA21903.1"/>
    <property type="molecule type" value="Genomic_DNA"/>
</dbReference>
<dbReference type="PIR" id="T40743">
    <property type="entry name" value="T40743"/>
</dbReference>
<dbReference type="RefSeq" id="NP_596492.1">
    <property type="nucleotide sequence ID" value="NM_001022412.2"/>
</dbReference>
<dbReference type="SMR" id="O94301"/>
<dbReference type="BioGRID" id="277716">
    <property type="interactions" value="20"/>
</dbReference>
<dbReference type="FunCoup" id="O94301">
    <property type="interactions" value="34"/>
</dbReference>
<dbReference type="IntAct" id="O94301">
    <property type="interactions" value="20"/>
</dbReference>
<dbReference type="MINT" id="O94301"/>
<dbReference type="STRING" id="284812.O94301"/>
<dbReference type="iPTMnet" id="O94301"/>
<dbReference type="PaxDb" id="4896-SPBC887.18c.1"/>
<dbReference type="EnsemblFungi" id="SPBC887.18c.1">
    <property type="protein sequence ID" value="SPBC887.18c.1:pep"/>
    <property type="gene ID" value="SPBC887.18c"/>
</dbReference>
<dbReference type="GeneID" id="2541202"/>
<dbReference type="KEGG" id="spo:2541202"/>
<dbReference type="PomBase" id="SPBC887.18c">
    <property type="gene designation" value="hfi1"/>
</dbReference>
<dbReference type="VEuPathDB" id="FungiDB:SPBC887.18c"/>
<dbReference type="eggNOG" id="ENOG502RX84">
    <property type="taxonomic scope" value="Eukaryota"/>
</dbReference>
<dbReference type="HOGENOM" id="CLU_802061_0_0_1"/>
<dbReference type="InParanoid" id="O94301"/>
<dbReference type="OMA" id="MLVEEYP"/>
<dbReference type="PhylomeDB" id="O94301"/>
<dbReference type="PRO" id="PR:O94301"/>
<dbReference type="Proteomes" id="UP000002485">
    <property type="component" value="Chromosome II"/>
</dbReference>
<dbReference type="GO" id="GO:0005634">
    <property type="term" value="C:nucleus"/>
    <property type="evidence" value="ECO:0007005"/>
    <property type="project" value="PomBase"/>
</dbReference>
<dbReference type="GO" id="GO:0000124">
    <property type="term" value="C:SAGA complex"/>
    <property type="evidence" value="ECO:0000314"/>
    <property type="project" value="PomBase"/>
</dbReference>
<dbReference type="GO" id="GO:0003713">
    <property type="term" value="F:transcription coactivator activity"/>
    <property type="evidence" value="ECO:0000318"/>
    <property type="project" value="GO_Central"/>
</dbReference>
<dbReference type="GO" id="GO:0006357">
    <property type="term" value="P:regulation of transcription by RNA polymerase II"/>
    <property type="evidence" value="ECO:0000269"/>
    <property type="project" value="PomBase"/>
</dbReference>
<dbReference type="GO" id="GO:0045815">
    <property type="term" value="P:transcription initiation-coupled chromatin remodeling"/>
    <property type="evidence" value="ECO:0000305"/>
    <property type="project" value="PomBase"/>
</dbReference>
<dbReference type="CDD" id="cd22933">
    <property type="entry name" value="HFD_HFI1"/>
    <property type="match status" value="1"/>
</dbReference>
<dbReference type="InterPro" id="IPR024738">
    <property type="entry name" value="Hfi1/Tada1"/>
</dbReference>
<dbReference type="PANTHER" id="PTHR21277">
    <property type="entry name" value="TRANSCRIPTIONAL ADAPTER 1"/>
    <property type="match status" value="1"/>
</dbReference>
<dbReference type="PANTHER" id="PTHR21277:SF5">
    <property type="entry name" value="TRANSCRIPTIONAL ADAPTER 1"/>
    <property type="match status" value="1"/>
</dbReference>
<dbReference type="Pfam" id="PF12767">
    <property type="entry name" value="SAGA-Tad1"/>
    <property type="match status" value="1"/>
</dbReference>
<proteinExistence type="evidence at protein level"/>
<sequence length="339" mass="37946">MTEGVTVQKVQSASSNGHKPNTVISQIISEMQSLLGSSFEVYTKTMTDFLIGQLSRKEMKSMLLTFAGKSNFDKLHNSIIFHILKLMQKNNDTFSALHHLPWFKRKKVDNSLFLHKKISSQNAQVRLIKRIVMSLSYKDRARIKTALKEKPVTPSLISGLLLETRIAKLPKIPVSRDKLNSVFVNDIKAGYVAPLACETLELPDSESLKERITAISLENGLLGGVQKGVSDIILAGLESHLKNILSRCFSILNKNIRQKNTENDAAGFTINDLNLAWTIEPHAFVEQYPQKLRMPFLLHDSYTEDEISICAESPSYMLASNDAQSDRNSVASLLDEVLS</sequence>
<keyword id="KW-0539">Nucleus</keyword>
<keyword id="KW-1185">Reference proteome</keyword>
<keyword id="KW-0804">Transcription</keyword>
<keyword id="KW-0805">Transcription regulation</keyword>
<protein>
    <recommendedName>
        <fullName>SAGA complex subunit Hfi1</fullName>
    </recommendedName>
    <alternativeName>
        <fullName>Transcriptional coactivator hfi1</fullName>
    </alternativeName>
</protein>
<comment type="function">
    <text evidence="1">Component of the transcription coactivator SAGA complex. SAGA acts as a general cofactor required for essentially all RNA polymerase II transcription. At the promoters, SAGA is required for transcription pre-initiation complex (PIC) recruitment. It influences RNA polymerase II transcriptional activity through different activities such as TBP interaction (via core/TAF module) and promoter selectivity, interaction with transcription activators (via Tra1/SPT module), and chromatin modification through histone acetylation (via HAT module) and deubiquitination (via DUB module). SAGA preferentially acetylates histones H3 (to form H3K9ac, H3K14ac, H3K18ac and H3K23ac) and H2B and deubiquitinates histone H2B. SAGA interacts with DNA via upstream activating sequences (UASs).</text>
</comment>
<comment type="subunit">
    <text evidence="1 3">Component of the 1.8 MDa SAGA (Spt-Ada-Gcn5 acetyltransferase) complex, which is composed of 19 subunits tra1, spt7, taf5, ngg1/ada3, sgf73, spt20, spt8, taf12, taf6, hfi1/ada1, ubp8, gcn5, ada2, spt3, sgf29, taf10, taf9, sgf11 and sus1 (PubMed:19056896). The SAGA complex is composed of 4 modules, namely the HAT (histone acetyltransferase) module (gcn5, ada2, ngg1/ada3 and sgf29), the DUB (deubiquitinating) module (ubp8, sgf11, sgf73 and sus1), the core or TAF (TBP-associated factor) module (taf5, taf6, taf9, taf10 and taf12), and the Tra1 or SPT (Suppressor of Ty) module (tra1, hfi1/ada1, spt3, spt7, spt8 and spt20). The Tra1/SPT module binds activators, the core module recruits TBP (TATA-binding protein), the HAT module contains the histone H3 acetyltransferase gcn5, and the DUB module comprises the histone H2B deubiquitinase ubp8 (By similarity).</text>
</comment>
<comment type="subcellular location">
    <subcellularLocation>
        <location evidence="2">Nucleus</location>
    </subcellularLocation>
</comment>
<comment type="similarity">
    <text evidence="4">Belongs to the HFI1 family.</text>
</comment>